<feature type="chain" id="PRO_0000126656" description="Phenylalanine--tRNA ligase alpha subunit">
    <location>
        <begin position="1"/>
        <end position="330"/>
    </location>
</feature>
<feature type="binding site" evidence="1">
    <location>
        <position position="257"/>
    </location>
    <ligand>
        <name>Mg(2+)</name>
        <dbReference type="ChEBI" id="CHEBI:18420"/>
        <note>shared with beta subunit</note>
    </ligand>
</feature>
<keyword id="KW-0030">Aminoacyl-tRNA synthetase</keyword>
<keyword id="KW-0067">ATP-binding</keyword>
<keyword id="KW-0963">Cytoplasm</keyword>
<keyword id="KW-0436">Ligase</keyword>
<keyword id="KW-0460">Magnesium</keyword>
<keyword id="KW-0479">Metal-binding</keyword>
<keyword id="KW-0547">Nucleotide-binding</keyword>
<keyword id="KW-0648">Protein biosynthesis</keyword>
<keyword id="KW-1185">Reference proteome</keyword>
<gene>
    <name evidence="1" type="primary">pheS</name>
    <name type="ordered locus">all4845</name>
</gene>
<comment type="catalytic activity">
    <reaction evidence="1">
        <text>tRNA(Phe) + L-phenylalanine + ATP = L-phenylalanyl-tRNA(Phe) + AMP + diphosphate + H(+)</text>
        <dbReference type="Rhea" id="RHEA:19413"/>
        <dbReference type="Rhea" id="RHEA-COMP:9668"/>
        <dbReference type="Rhea" id="RHEA-COMP:9699"/>
        <dbReference type="ChEBI" id="CHEBI:15378"/>
        <dbReference type="ChEBI" id="CHEBI:30616"/>
        <dbReference type="ChEBI" id="CHEBI:33019"/>
        <dbReference type="ChEBI" id="CHEBI:58095"/>
        <dbReference type="ChEBI" id="CHEBI:78442"/>
        <dbReference type="ChEBI" id="CHEBI:78531"/>
        <dbReference type="ChEBI" id="CHEBI:456215"/>
        <dbReference type="EC" id="6.1.1.20"/>
    </reaction>
</comment>
<comment type="cofactor">
    <cofactor evidence="1">
        <name>Mg(2+)</name>
        <dbReference type="ChEBI" id="CHEBI:18420"/>
    </cofactor>
    <text evidence="1">Binds 2 magnesium ions per tetramer.</text>
</comment>
<comment type="subunit">
    <text evidence="1">Tetramer of two alpha and two beta subunits.</text>
</comment>
<comment type="subcellular location">
    <subcellularLocation>
        <location evidence="1">Cytoplasm</location>
    </subcellularLocation>
</comment>
<comment type="similarity">
    <text evidence="1">Belongs to the class-II aminoacyl-tRNA synthetase family. Phe-tRNA synthetase alpha subunit type 1 subfamily.</text>
</comment>
<dbReference type="EC" id="6.1.1.20" evidence="1"/>
<dbReference type="EMBL" id="BA000019">
    <property type="protein sequence ID" value="BAB76544.1"/>
    <property type="molecule type" value="Genomic_DNA"/>
</dbReference>
<dbReference type="PIR" id="AE2411">
    <property type="entry name" value="AE2411"/>
</dbReference>
<dbReference type="RefSeq" id="WP_010998973.1">
    <property type="nucleotide sequence ID" value="NZ_RSCN01000037.1"/>
</dbReference>
<dbReference type="SMR" id="Q8YMT4"/>
<dbReference type="STRING" id="103690.gene:10496899"/>
<dbReference type="KEGG" id="ana:all4845"/>
<dbReference type="eggNOG" id="COG0016">
    <property type="taxonomic scope" value="Bacteria"/>
</dbReference>
<dbReference type="OrthoDB" id="9800719at2"/>
<dbReference type="Proteomes" id="UP000002483">
    <property type="component" value="Chromosome"/>
</dbReference>
<dbReference type="GO" id="GO:0005737">
    <property type="term" value="C:cytoplasm"/>
    <property type="evidence" value="ECO:0007669"/>
    <property type="project" value="UniProtKB-SubCell"/>
</dbReference>
<dbReference type="GO" id="GO:0005524">
    <property type="term" value="F:ATP binding"/>
    <property type="evidence" value="ECO:0007669"/>
    <property type="project" value="UniProtKB-UniRule"/>
</dbReference>
<dbReference type="GO" id="GO:0000287">
    <property type="term" value="F:magnesium ion binding"/>
    <property type="evidence" value="ECO:0007669"/>
    <property type="project" value="UniProtKB-UniRule"/>
</dbReference>
<dbReference type="GO" id="GO:0004826">
    <property type="term" value="F:phenylalanine-tRNA ligase activity"/>
    <property type="evidence" value="ECO:0007669"/>
    <property type="project" value="UniProtKB-UniRule"/>
</dbReference>
<dbReference type="GO" id="GO:0000049">
    <property type="term" value="F:tRNA binding"/>
    <property type="evidence" value="ECO:0007669"/>
    <property type="project" value="InterPro"/>
</dbReference>
<dbReference type="GO" id="GO:0006432">
    <property type="term" value="P:phenylalanyl-tRNA aminoacylation"/>
    <property type="evidence" value="ECO:0007669"/>
    <property type="project" value="UniProtKB-UniRule"/>
</dbReference>
<dbReference type="CDD" id="cd00496">
    <property type="entry name" value="PheRS_alpha_core"/>
    <property type="match status" value="1"/>
</dbReference>
<dbReference type="FunFam" id="3.30.930.10:FF:000003">
    <property type="entry name" value="Phenylalanine--tRNA ligase alpha subunit"/>
    <property type="match status" value="1"/>
</dbReference>
<dbReference type="Gene3D" id="3.30.930.10">
    <property type="entry name" value="Bira Bifunctional Protein, Domain 2"/>
    <property type="match status" value="1"/>
</dbReference>
<dbReference type="HAMAP" id="MF_00281">
    <property type="entry name" value="Phe_tRNA_synth_alpha1"/>
    <property type="match status" value="1"/>
</dbReference>
<dbReference type="InterPro" id="IPR006195">
    <property type="entry name" value="aa-tRNA-synth_II"/>
</dbReference>
<dbReference type="InterPro" id="IPR045864">
    <property type="entry name" value="aa-tRNA-synth_II/BPL/LPL"/>
</dbReference>
<dbReference type="InterPro" id="IPR004529">
    <property type="entry name" value="Phe-tRNA-synth_IIc_asu"/>
</dbReference>
<dbReference type="InterPro" id="IPR004188">
    <property type="entry name" value="Phe-tRNA_ligase_II_N"/>
</dbReference>
<dbReference type="InterPro" id="IPR022911">
    <property type="entry name" value="Phe_tRNA_ligase_alpha1_bac"/>
</dbReference>
<dbReference type="InterPro" id="IPR002319">
    <property type="entry name" value="Phenylalanyl-tRNA_Synthase"/>
</dbReference>
<dbReference type="InterPro" id="IPR010978">
    <property type="entry name" value="tRNA-bd_arm"/>
</dbReference>
<dbReference type="NCBIfam" id="TIGR00468">
    <property type="entry name" value="pheS"/>
    <property type="match status" value="1"/>
</dbReference>
<dbReference type="PANTHER" id="PTHR11538:SF41">
    <property type="entry name" value="PHENYLALANINE--TRNA LIGASE, MITOCHONDRIAL"/>
    <property type="match status" value="1"/>
</dbReference>
<dbReference type="PANTHER" id="PTHR11538">
    <property type="entry name" value="PHENYLALANYL-TRNA SYNTHETASE"/>
    <property type="match status" value="1"/>
</dbReference>
<dbReference type="Pfam" id="PF02912">
    <property type="entry name" value="Phe_tRNA-synt_N"/>
    <property type="match status" value="1"/>
</dbReference>
<dbReference type="Pfam" id="PF01409">
    <property type="entry name" value="tRNA-synt_2d"/>
    <property type="match status" value="1"/>
</dbReference>
<dbReference type="SUPFAM" id="SSF55681">
    <property type="entry name" value="Class II aaRS and biotin synthetases"/>
    <property type="match status" value="1"/>
</dbReference>
<dbReference type="SUPFAM" id="SSF46589">
    <property type="entry name" value="tRNA-binding arm"/>
    <property type="match status" value="1"/>
</dbReference>
<dbReference type="PROSITE" id="PS50862">
    <property type="entry name" value="AA_TRNA_LIGASE_II"/>
    <property type="match status" value="1"/>
</dbReference>
<organism>
    <name type="scientific">Nostoc sp. (strain PCC 7120 / SAG 25.82 / UTEX 2576)</name>
    <dbReference type="NCBI Taxonomy" id="103690"/>
    <lineage>
        <taxon>Bacteria</taxon>
        <taxon>Bacillati</taxon>
        <taxon>Cyanobacteriota</taxon>
        <taxon>Cyanophyceae</taxon>
        <taxon>Nostocales</taxon>
        <taxon>Nostocaceae</taxon>
        <taxon>Nostoc</taxon>
    </lineage>
</organism>
<accession>Q8YMT4</accession>
<name>SYFA_NOSS1</name>
<protein>
    <recommendedName>
        <fullName evidence="1">Phenylalanine--tRNA ligase alpha subunit</fullName>
        <ecNumber evidence="1">6.1.1.20</ecNumber>
    </recommendedName>
    <alternativeName>
        <fullName evidence="1">Phenylalanyl-tRNA synthetase alpha subunit</fullName>
        <shortName evidence="1">PheRS</shortName>
    </alternativeName>
</protein>
<proteinExistence type="inferred from homology"/>
<reference key="1">
    <citation type="journal article" date="2001" name="DNA Res.">
        <title>Complete genomic sequence of the filamentous nitrogen-fixing cyanobacterium Anabaena sp. strain PCC 7120.</title>
        <authorList>
            <person name="Kaneko T."/>
            <person name="Nakamura Y."/>
            <person name="Wolk C.P."/>
            <person name="Kuritz T."/>
            <person name="Sasamoto S."/>
            <person name="Watanabe A."/>
            <person name="Iriguchi M."/>
            <person name="Ishikawa A."/>
            <person name="Kawashima K."/>
            <person name="Kimura T."/>
            <person name="Kishida Y."/>
            <person name="Kohara M."/>
            <person name="Matsumoto M."/>
            <person name="Matsuno A."/>
            <person name="Muraki A."/>
            <person name="Nakazaki N."/>
            <person name="Shimpo S."/>
            <person name="Sugimoto M."/>
            <person name="Takazawa M."/>
            <person name="Yamada M."/>
            <person name="Yasuda M."/>
            <person name="Tabata S."/>
        </authorList>
    </citation>
    <scope>NUCLEOTIDE SEQUENCE [LARGE SCALE GENOMIC DNA]</scope>
    <source>
        <strain>PCC 7120 / SAG 25.82 / UTEX 2576</strain>
    </source>
</reference>
<sequence>MTSNLEAQLLALRQEGEQAIAAADTLERLEELRVSYLGKKGQLGALLRSMGQMSAEERPKIGAIANTVKEALQASLDKQRESLESAQIQAQLDAETLDVTMPGIYKPQGRIHPLNGIIDRALDVFVGLGYTVAQGLEMETDYYNFEALNTPPDHPARDMQDTFYLPDGNLLRTHTSSVQIRYMEKEEPPIHIVAPGRVYRRDNVDATHSAVFHQIELLAIDEGLTFTDLKGTIKVFLQAMFGDLPIRFRASYFPFTEPSAEVDLQWNGRWLEVMGCGMVDPNVMKSVGYNPEIYTGFAAGFGVERFAMVLHQIDDIRRLYASDLRFLRQF</sequence>
<evidence type="ECO:0000255" key="1">
    <source>
        <dbReference type="HAMAP-Rule" id="MF_00281"/>
    </source>
</evidence>